<evidence type="ECO:0000250" key="1"/>
<evidence type="ECO:0000255" key="2">
    <source>
        <dbReference type="PROSITE-ProRule" id="PRU00117"/>
    </source>
</evidence>
<evidence type="ECO:0000255" key="3">
    <source>
        <dbReference type="PROSITE-ProRule" id="PRU00175"/>
    </source>
</evidence>
<evidence type="ECO:0000256" key="4">
    <source>
        <dbReference type="SAM" id="MobiDB-lite"/>
    </source>
</evidence>
<accession>A1L3F4</accession>
<proteinExistence type="evidence at transcript level"/>
<sequence length="507" mass="54164">MPSSLFADMERNGSGGGGGETLDDQRALQIALDQLSLLGLDNDESAMYDNEPRKKSINMTECVQVPSSEHVAEIVGRQGCKIKALRAKTNTYIKTPVRGEEPVFVVTGRKEDVALARREIISAAEHFSMIRASRNKNAAALNGGSVPAPPNLPGQTTIQVRVPYRVVGLVVGPKGATIKRIQQQTHTYIVTPSRDKEPVFEVTGMPENVDRAREEIEAHIAVRTGGLIEVADENDFHANGTDVGFDLHGSLWSKSNQSSGSRKALSNYRNDSSSSLGSASTDSYFGGTRMADYSPPSPDLSYTNNNNNNNGNGYVYSTGISPDCTDLTFESGFDPAPAPPPSAYTWSQLERSTGSAPYHNNANGILLNQRRLNGVGCTTAPRLSPPLHTCNGLSEHPLARRVRSDPGGGLSYSAYSNMACDSSSSSSSSSSSSSSSSSSSSSSSSSGMRRKGSRECSICFESEVIAALVPCGHNLFCMECANRICEKNQPQCPVCHAGVTQAIRIFS</sequence>
<feature type="chain" id="PRO_0000281014" description="RNA-binding protein MEX3B">
    <location>
        <begin position="1"/>
        <end position="507"/>
    </location>
</feature>
<feature type="domain" description="KH 1" evidence="2">
    <location>
        <begin position="59"/>
        <end position="120"/>
    </location>
</feature>
<feature type="domain" description="KH 2" evidence="2">
    <location>
        <begin position="155"/>
        <end position="216"/>
    </location>
</feature>
<feature type="zinc finger region" description="RING-type" evidence="3">
    <location>
        <begin position="456"/>
        <end position="496"/>
    </location>
</feature>
<feature type="region of interest" description="Disordered" evidence="4">
    <location>
        <begin position="1"/>
        <end position="22"/>
    </location>
</feature>
<feature type="region of interest" description="Disordered" evidence="4">
    <location>
        <begin position="256"/>
        <end position="279"/>
    </location>
</feature>
<feature type="region of interest" description="Disordered" evidence="4">
    <location>
        <begin position="426"/>
        <end position="450"/>
    </location>
</feature>
<feature type="compositionally biased region" description="Low complexity" evidence="4">
    <location>
        <begin position="426"/>
        <end position="446"/>
    </location>
</feature>
<organism>
    <name type="scientific">Xenopus laevis</name>
    <name type="common">African clawed frog</name>
    <dbReference type="NCBI Taxonomy" id="8355"/>
    <lineage>
        <taxon>Eukaryota</taxon>
        <taxon>Metazoa</taxon>
        <taxon>Chordata</taxon>
        <taxon>Craniata</taxon>
        <taxon>Vertebrata</taxon>
        <taxon>Euteleostomi</taxon>
        <taxon>Amphibia</taxon>
        <taxon>Batrachia</taxon>
        <taxon>Anura</taxon>
        <taxon>Pipoidea</taxon>
        <taxon>Pipidae</taxon>
        <taxon>Xenopodinae</taxon>
        <taxon>Xenopus</taxon>
        <taxon>Xenopus</taxon>
    </lineage>
</organism>
<reference key="1">
    <citation type="submission" date="2006-12" db="EMBL/GenBank/DDBJ databases">
        <authorList>
            <consortium name="NIH - Xenopus Gene Collection (XGC) project"/>
        </authorList>
    </citation>
    <scope>NUCLEOTIDE SEQUENCE [LARGE SCALE MRNA]</scope>
    <source>
        <tissue>Embryo</tissue>
    </source>
</reference>
<comment type="function">
    <text evidence="1">RNA-binding protein. May be involved in post-transcriptional regulatory mechanisms (By similarity).</text>
</comment>
<comment type="subcellular location">
    <subcellularLocation>
        <location evidence="1">Cytoplasm</location>
    </subcellularLocation>
    <subcellularLocation>
        <location evidence="1">Nucleus</location>
    </subcellularLocation>
    <subcellularLocation>
        <location evidence="1">Cytoplasmic granule</location>
    </subcellularLocation>
    <subcellularLocation>
        <location evidence="1">Cytoplasm</location>
        <location evidence="1">P-body</location>
    </subcellularLocation>
    <text evidence="1">Predominantly expressed in the cytoplasm and shuttles between the cytoplasm and the nucleus through the CRM1 export pathway.</text>
</comment>
<comment type="domain">
    <text evidence="1">Binds RNA through its KH domains.</text>
</comment>
<gene>
    <name type="primary">mex3b</name>
    <name type="synonym">rkhd3</name>
</gene>
<name>MEX3B_XENLA</name>
<dbReference type="EMBL" id="BC130069">
    <property type="protein sequence ID" value="AAI30070.1"/>
    <property type="molecule type" value="mRNA"/>
</dbReference>
<dbReference type="RefSeq" id="NP_001091216.1">
    <property type="nucleotide sequence ID" value="NM_001097747.1"/>
</dbReference>
<dbReference type="SMR" id="A1L3F4"/>
<dbReference type="GeneID" id="100036990"/>
<dbReference type="KEGG" id="xla:100036990"/>
<dbReference type="AGR" id="Xenbase:XB-GENE-5857382"/>
<dbReference type="CTD" id="100036990"/>
<dbReference type="Xenbase" id="XB-GENE-5857382">
    <property type="gene designation" value="mex3b.S"/>
</dbReference>
<dbReference type="OrthoDB" id="427410at2759"/>
<dbReference type="Proteomes" id="UP000186698">
    <property type="component" value="Chromosome 3S"/>
</dbReference>
<dbReference type="Bgee" id="100036990">
    <property type="expression patterns" value="Expressed in internal ear and 19 other cell types or tissues"/>
</dbReference>
<dbReference type="GO" id="GO:0005634">
    <property type="term" value="C:nucleus"/>
    <property type="evidence" value="ECO:0007669"/>
    <property type="project" value="UniProtKB-SubCell"/>
</dbReference>
<dbReference type="GO" id="GO:0000932">
    <property type="term" value="C:P-body"/>
    <property type="evidence" value="ECO:0007669"/>
    <property type="project" value="UniProtKB-SubCell"/>
</dbReference>
<dbReference type="GO" id="GO:0003723">
    <property type="term" value="F:RNA binding"/>
    <property type="evidence" value="ECO:0007669"/>
    <property type="project" value="UniProtKB-KW"/>
</dbReference>
<dbReference type="GO" id="GO:0008270">
    <property type="term" value="F:zinc ion binding"/>
    <property type="evidence" value="ECO:0007669"/>
    <property type="project" value="UniProtKB-KW"/>
</dbReference>
<dbReference type="CDD" id="cd22423">
    <property type="entry name" value="KH-I_MEX3_rpt1"/>
    <property type="match status" value="1"/>
</dbReference>
<dbReference type="CDD" id="cd22424">
    <property type="entry name" value="KH-I_MEX3_rpt2"/>
    <property type="match status" value="1"/>
</dbReference>
<dbReference type="CDD" id="cd16721">
    <property type="entry name" value="RING-HC_MEX3B"/>
    <property type="match status" value="1"/>
</dbReference>
<dbReference type="FunFam" id="3.30.1370.10:FF:000013">
    <property type="entry name" value="Mex-3 RNA-binding family member B"/>
    <property type="match status" value="1"/>
</dbReference>
<dbReference type="FunFam" id="3.30.40.10:FF:000090">
    <property type="entry name" value="Mex-3 RNA-binding family member C"/>
    <property type="match status" value="1"/>
</dbReference>
<dbReference type="FunFam" id="3.30.1370.10:FF:000012">
    <property type="entry name" value="Mex-3 RNA-binding family member D"/>
    <property type="match status" value="1"/>
</dbReference>
<dbReference type="Gene3D" id="3.30.1370.10">
    <property type="entry name" value="K Homology domain, type 1"/>
    <property type="match status" value="2"/>
</dbReference>
<dbReference type="Gene3D" id="3.30.40.10">
    <property type="entry name" value="Zinc/RING finger domain, C3HC4 (zinc finger)"/>
    <property type="match status" value="1"/>
</dbReference>
<dbReference type="InterPro" id="IPR047228">
    <property type="entry name" value="KH-I_MEX3_rpt1"/>
</dbReference>
<dbReference type="InterPro" id="IPR047226">
    <property type="entry name" value="KH-I_MEX3_rpt2"/>
</dbReference>
<dbReference type="InterPro" id="IPR004087">
    <property type="entry name" value="KH_dom"/>
</dbReference>
<dbReference type="InterPro" id="IPR004088">
    <property type="entry name" value="KH_dom_type_1"/>
</dbReference>
<dbReference type="InterPro" id="IPR036612">
    <property type="entry name" value="KH_dom_type_1_sf"/>
</dbReference>
<dbReference type="InterPro" id="IPR047227">
    <property type="entry name" value="MEX3"/>
</dbReference>
<dbReference type="InterPro" id="IPR001841">
    <property type="entry name" value="Znf_RING"/>
</dbReference>
<dbReference type="InterPro" id="IPR013083">
    <property type="entry name" value="Znf_RING/FYVE/PHD"/>
</dbReference>
<dbReference type="PANTHER" id="PTHR23285">
    <property type="entry name" value="RING FINGER AND KH DOMAIN CONTAINING PROTEIN 1"/>
    <property type="match status" value="1"/>
</dbReference>
<dbReference type="PANTHER" id="PTHR23285:SF5">
    <property type="entry name" value="RNA-BINDING PROTEIN MEX3B"/>
    <property type="match status" value="1"/>
</dbReference>
<dbReference type="Pfam" id="PF00013">
    <property type="entry name" value="KH_1"/>
    <property type="match status" value="2"/>
</dbReference>
<dbReference type="Pfam" id="PF13920">
    <property type="entry name" value="zf-C3HC4_3"/>
    <property type="match status" value="1"/>
</dbReference>
<dbReference type="SMART" id="SM00322">
    <property type="entry name" value="KH"/>
    <property type="match status" value="2"/>
</dbReference>
<dbReference type="SMART" id="SM00184">
    <property type="entry name" value="RING"/>
    <property type="match status" value="1"/>
</dbReference>
<dbReference type="SUPFAM" id="SSF54791">
    <property type="entry name" value="Eukaryotic type KH-domain (KH-domain type I)"/>
    <property type="match status" value="2"/>
</dbReference>
<dbReference type="SUPFAM" id="SSF57850">
    <property type="entry name" value="RING/U-box"/>
    <property type="match status" value="1"/>
</dbReference>
<dbReference type="PROSITE" id="PS50084">
    <property type="entry name" value="KH_TYPE_1"/>
    <property type="match status" value="2"/>
</dbReference>
<dbReference type="PROSITE" id="PS50089">
    <property type="entry name" value="ZF_RING_2"/>
    <property type="match status" value="1"/>
</dbReference>
<keyword id="KW-0963">Cytoplasm</keyword>
<keyword id="KW-0479">Metal-binding</keyword>
<keyword id="KW-0539">Nucleus</keyword>
<keyword id="KW-1185">Reference proteome</keyword>
<keyword id="KW-0677">Repeat</keyword>
<keyword id="KW-0694">RNA-binding</keyword>
<keyword id="KW-0862">Zinc</keyword>
<keyword id="KW-0863">Zinc-finger</keyword>
<protein>
    <recommendedName>
        <fullName>RNA-binding protein MEX3B</fullName>
    </recommendedName>
    <alternativeName>
        <fullName>RING finger and KH domain-containing protein 3</fullName>
    </alternativeName>
</protein>